<gene>
    <name type="primary">Tulp2</name>
    <name type="synonym">Pdet</name>
</gene>
<keyword id="KW-0025">Alternative splicing</keyword>
<keyword id="KW-0963">Cytoplasm</keyword>
<keyword id="KW-0597">Phosphoprotein</keyword>
<keyword id="KW-1185">Reference proteome</keyword>
<keyword id="KW-0964">Secreted</keyword>
<sequence>MDREGPRGPRSGASQENEQWKKETLEDEFSGVRLQKLEQQRQLFEKKQRRKRQEPLMVQANPDATLRHRRPRRGEERFQSDSSWGLGVGSPFLQENVPQAHLPSGAHSALVTMSYVADGSGERAPLLSPRGAVYTRGNGPAVRHHLCWLPDSSDSDVEEVTMEDIPVISRPPQTNLANLRRGWLASPGPGISQEEKEEEVGSTDARVEDKTPSPDPDPDPTVNSDGDHGDLAPCKVEENTAQKNTETASGIGDEDREKGEVTESTETNYAPVASKVLQGDDGDASNHNAWNMTCPQPRIPGPRLGEDMEAYVLLPAPRDHMVQCRIVRNKHGMDKGMFPSYYLYLEAEDGVAHFLLAGRKRKRSKTSNYLISLDPKDMSRNGSNFVGKVRSNVLGTKFTIFDNGVNPERSYWVPDSARIREELGVVCYETNVLGFRGPRKMTVILPGMDSRKQRMKVQPQNDQDSILSRVQKGAGHGLLLLQNKAPSWSDESGAYVLNFHGRVTRASVKNFQIVHPDEPDHLVLQFGRVAPNIFTMDFRYPLCPLQAFAICLSSFDGKLAFF</sequence>
<accession>P46686</accession>
<accession>Q3TTV1</accession>
<accession>Q5FW93</accession>
<accession>Q8C5R7</accession>
<accession>Q8C5R9</accession>
<accession>Q9R1I8</accession>
<dbReference type="EMBL" id="AF105712">
    <property type="protein sequence ID" value="AAD38452.1"/>
    <property type="status" value="ALT_INIT"/>
    <property type="molecule type" value="mRNA"/>
</dbReference>
<dbReference type="EMBL" id="AK077200">
    <property type="protein sequence ID" value="BAC36678.1"/>
    <property type="molecule type" value="mRNA"/>
</dbReference>
<dbReference type="EMBL" id="AK077211">
    <property type="protein sequence ID" value="BAC36686.1"/>
    <property type="status" value="ALT_INIT"/>
    <property type="molecule type" value="mRNA"/>
</dbReference>
<dbReference type="EMBL" id="AK161165">
    <property type="protein sequence ID" value="BAE36223.1"/>
    <property type="molecule type" value="mRNA"/>
</dbReference>
<dbReference type="EMBL" id="BC089545">
    <property type="protein sequence ID" value="AAH89545.1"/>
    <property type="molecule type" value="mRNA"/>
</dbReference>
<dbReference type="EMBL" id="X69827">
    <property type="protein sequence ID" value="CAA49481.1"/>
    <property type="status" value="ALT_INIT"/>
    <property type="molecule type" value="mRNA"/>
</dbReference>
<dbReference type="CCDS" id="CCDS39953.1">
    <molecule id="P46686-1"/>
</dbReference>
<dbReference type="CCDS" id="CCDS39954.1">
    <molecule id="P46686-2"/>
</dbReference>
<dbReference type="CCDS" id="CCDS71960.1">
    <molecule id="P46686-3"/>
</dbReference>
<dbReference type="CCDS" id="CCDS80720.1">
    <molecule id="P46686-4"/>
</dbReference>
<dbReference type="RefSeq" id="NP_001039020.1">
    <molecule id="P46686-1"/>
    <property type="nucleotide sequence ID" value="NM_001045555.2"/>
</dbReference>
<dbReference type="RefSeq" id="NP_001277927.1">
    <molecule id="P46686-4"/>
    <property type="nucleotide sequence ID" value="NM_001290998.2"/>
</dbReference>
<dbReference type="RefSeq" id="NP_001277928.1">
    <molecule id="P46686-3"/>
    <property type="nucleotide sequence ID" value="NM_001290999.2"/>
</dbReference>
<dbReference type="RefSeq" id="NP_032833.2">
    <molecule id="P46686-2"/>
    <property type="nucleotide sequence ID" value="NM_008807.3"/>
</dbReference>
<dbReference type="RefSeq" id="XP_006541088.1">
    <molecule id="P46686-5"/>
    <property type="nucleotide sequence ID" value="XM_006541025.4"/>
</dbReference>
<dbReference type="RefSeq" id="XP_030098678.1">
    <molecule id="P46686-3"/>
    <property type="nucleotide sequence ID" value="XM_030242818.1"/>
</dbReference>
<dbReference type="RefSeq" id="XP_030098679.1">
    <molecule id="P46686-3"/>
    <property type="nucleotide sequence ID" value="XM_030242819.1"/>
</dbReference>
<dbReference type="SMR" id="P46686"/>
<dbReference type="FunCoup" id="P46686">
    <property type="interactions" value="11"/>
</dbReference>
<dbReference type="STRING" id="10090.ENSMUSP00000103391"/>
<dbReference type="iPTMnet" id="P46686"/>
<dbReference type="PhosphoSitePlus" id="P46686"/>
<dbReference type="SwissPalm" id="P46686"/>
<dbReference type="PaxDb" id="10090-ENSMUSP00000103391"/>
<dbReference type="ProteomicsDB" id="298062">
    <molecule id="P46686-1"/>
</dbReference>
<dbReference type="ProteomicsDB" id="298063">
    <molecule id="P46686-2"/>
</dbReference>
<dbReference type="ProteomicsDB" id="298064">
    <molecule id="P46686-3"/>
</dbReference>
<dbReference type="ProteomicsDB" id="298065">
    <molecule id="P46686-4"/>
</dbReference>
<dbReference type="ProteomicsDB" id="298066">
    <molecule id="P46686-5"/>
</dbReference>
<dbReference type="Antibodypedia" id="31829">
    <property type="antibodies" value="187 antibodies from 25 providers"/>
</dbReference>
<dbReference type="DNASU" id="56734"/>
<dbReference type="Ensembl" id="ENSMUST00000024233.15">
    <molecule id="P46686-2"/>
    <property type="protein sequence ID" value="ENSMUSP00000024233.7"/>
    <property type="gene ID" value="ENSMUSG00000023467.19"/>
</dbReference>
<dbReference type="Ensembl" id="ENSMUST00000085331.14">
    <molecule id="P46686-4"/>
    <property type="protein sequence ID" value="ENSMUSP00000082438.6"/>
    <property type="gene ID" value="ENSMUSG00000023467.19"/>
</dbReference>
<dbReference type="Ensembl" id="ENSMUST00000107759.10">
    <molecule id="P46686-3"/>
    <property type="protein sequence ID" value="ENSMUSP00000103388.2"/>
    <property type="gene ID" value="ENSMUSG00000023467.19"/>
</dbReference>
<dbReference type="Ensembl" id="ENSMUST00000107762.10">
    <molecule id="P46686-1"/>
    <property type="protein sequence ID" value="ENSMUSP00000103391.2"/>
    <property type="gene ID" value="ENSMUSG00000023467.19"/>
</dbReference>
<dbReference type="Ensembl" id="ENSMUST00000210868.2">
    <molecule id="P46686-5"/>
    <property type="protein sequence ID" value="ENSMUSP00000147710.2"/>
    <property type="gene ID" value="ENSMUSG00000023467.19"/>
</dbReference>
<dbReference type="GeneID" id="56734"/>
<dbReference type="KEGG" id="mmu:56734"/>
<dbReference type="UCSC" id="uc009gvk.2">
    <molecule id="P46686-3"/>
    <property type="organism name" value="mouse"/>
</dbReference>
<dbReference type="UCSC" id="uc009gvp.2">
    <molecule id="P46686-2"/>
    <property type="organism name" value="mouse"/>
</dbReference>
<dbReference type="UCSC" id="uc009gvq.2">
    <molecule id="P46686-1"/>
    <property type="organism name" value="mouse"/>
</dbReference>
<dbReference type="UCSC" id="uc009gvr.2">
    <molecule id="P46686-4"/>
    <property type="organism name" value="mouse"/>
</dbReference>
<dbReference type="AGR" id="MGI:1861600"/>
<dbReference type="CTD" id="7288"/>
<dbReference type="MGI" id="MGI:1861600">
    <property type="gene designation" value="Tulp2"/>
</dbReference>
<dbReference type="VEuPathDB" id="HostDB:ENSMUSG00000023467"/>
<dbReference type="eggNOG" id="KOG2502">
    <property type="taxonomic scope" value="Eukaryota"/>
</dbReference>
<dbReference type="GeneTree" id="ENSGT00940000161908"/>
<dbReference type="HOGENOM" id="CLU_028236_0_0_1"/>
<dbReference type="InParanoid" id="P46686"/>
<dbReference type="OMA" id="HNKTPSW"/>
<dbReference type="PhylomeDB" id="P46686"/>
<dbReference type="TreeFam" id="TF314076"/>
<dbReference type="BioGRID-ORCS" id="56734">
    <property type="hits" value="4 hits in 59 CRISPR screens"/>
</dbReference>
<dbReference type="ChiTaRS" id="Tulp2">
    <property type="organism name" value="mouse"/>
</dbReference>
<dbReference type="PRO" id="PR:P46686"/>
<dbReference type="Proteomes" id="UP000000589">
    <property type="component" value="Chromosome 7"/>
</dbReference>
<dbReference type="RNAct" id="P46686">
    <property type="molecule type" value="protein"/>
</dbReference>
<dbReference type="Bgee" id="ENSMUSG00000023467">
    <property type="expression patterns" value="Expressed in seminiferous tubule of testis and 63 other cell types or tissues"/>
</dbReference>
<dbReference type="ExpressionAtlas" id="P46686">
    <property type="expression patterns" value="baseline and differential"/>
</dbReference>
<dbReference type="GO" id="GO:0005737">
    <property type="term" value="C:cytoplasm"/>
    <property type="evidence" value="ECO:0007669"/>
    <property type="project" value="UniProtKB-SubCell"/>
</dbReference>
<dbReference type="GO" id="GO:0005576">
    <property type="term" value="C:extracellular region"/>
    <property type="evidence" value="ECO:0007669"/>
    <property type="project" value="UniProtKB-SubCell"/>
</dbReference>
<dbReference type="GO" id="GO:0008081">
    <property type="term" value="F:phosphoric diester hydrolase activity"/>
    <property type="evidence" value="ECO:0000250"/>
    <property type="project" value="MGI"/>
</dbReference>
<dbReference type="GO" id="GO:0044877">
    <property type="term" value="F:protein-containing complex binding"/>
    <property type="evidence" value="ECO:0000266"/>
    <property type="project" value="MGI"/>
</dbReference>
<dbReference type="FunFam" id="3.20.90.10:FF:000001">
    <property type="entry name" value="Tubby-like protein"/>
    <property type="match status" value="1"/>
</dbReference>
<dbReference type="Gene3D" id="3.20.90.10">
    <property type="entry name" value="Tubby Protein, Chain A"/>
    <property type="match status" value="1"/>
</dbReference>
<dbReference type="InterPro" id="IPR025659">
    <property type="entry name" value="Tubby-like_C"/>
</dbReference>
<dbReference type="InterPro" id="IPR000007">
    <property type="entry name" value="Tubby_C"/>
</dbReference>
<dbReference type="InterPro" id="IPR018066">
    <property type="entry name" value="Tubby_C_CS"/>
</dbReference>
<dbReference type="InterPro" id="IPR005398">
    <property type="entry name" value="Tubby_N"/>
</dbReference>
<dbReference type="PANTHER" id="PTHR16517">
    <property type="entry name" value="TUBBY-RELATED"/>
    <property type="match status" value="1"/>
</dbReference>
<dbReference type="PANTHER" id="PTHR16517:SF24">
    <property type="entry name" value="TUBBY-RELATED PROTEIN 2"/>
    <property type="match status" value="1"/>
</dbReference>
<dbReference type="Pfam" id="PF01167">
    <property type="entry name" value="Tub"/>
    <property type="match status" value="1"/>
</dbReference>
<dbReference type="Pfam" id="PF16322">
    <property type="entry name" value="Tub_N"/>
    <property type="match status" value="1"/>
</dbReference>
<dbReference type="PRINTS" id="PR01573">
    <property type="entry name" value="SUPERTUBBY"/>
</dbReference>
<dbReference type="PRINTS" id="PR01574">
    <property type="entry name" value="TUBBYPROTEIN"/>
</dbReference>
<dbReference type="SUPFAM" id="SSF54518">
    <property type="entry name" value="Tubby C-terminal domain-like"/>
    <property type="match status" value="1"/>
</dbReference>
<dbReference type="PROSITE" id="PS01200">
    <property type="entry name" value="TUB_1"/>
    <property type="match status" value="1"/>
</dbReference>
<organism>
    <name type="scientific">Mus musculus</name>
    <name type="common">Mouse</name>
    <dbReference type="NCBI Taxonomy" id="10090"/>
    <lineage>
        <taxon>Eukaryota</taxon>
        <taxon>Metazoa</taxon>
        <taxon>Chordata</taxon>
        <taxon>Craniata</taxon>
        <taxon>Vertebrata</taxon>
        <taxon>Euteleostomi</taxon>
        <taxon>Mammalia</taxon>
        <taxon>Eutheria</taxon>
        <taxon>Euarchontoglires</taxon>
        <taxon>Glires</taxon>
        <taxon>Rodentia</taxon>
        <taxon>Myomorpha</taxon>
        <taxon>Muroidea</taxon>
        <taxon>Muridae</taxon>
        <taxon>Murinae</taxon>
        <taxon>Mus</taxon>
        <taxon>Mus</taxon>
    </lineage>
</organism>
<reference key="1">
    <citation type="submission" date="1998-11" db="EMBL/GenBank/DDBJ databases">
        <title>Apoptotic photoreceptor cell death in tubby mice and the localization of tubby gene family members in the retina.</title>
        <authorList>
            <person name="Ikeda S."/>
            <person name="Sorokina I."/>
            <person name="Naggert J.K."/>
            <person name="North M.A."/>
            <person name="Nishina P.M."/>
        </authorList>
    </citation>
    <scope>NUCLEOTIDE SEQUENCE [MRNA] (ISOFORM 2)</scope>
    <source>
        <strain>BALB/cJ</strain>
    </source>
</reference>
<reference key="2">
    <citation type="journal article" date="2005" name="Science">
        <title>The transcriptional landscape of the mammalian genome.</title>
        <authorList>
            <person name="Carninci P."/>
            <person name="Kasukawa T."/>
            <person name="Katayama S."/>
            <person name="Gough J."/>
            <person name="Frith M.C."/>
            <person name="Maeda N."/>
            <person name="Oyama R."/>
            <person name="Ravasi T."/>
            <person name="Lenhard B."/>
            <person name="Wells C."/>
            <person name="Kodzius R."/>
            <person name="Shimokawa K."/>
            <person name="Bajic V.B."/>
            <person name="Brenner S.E."/>
            <person name="Batalov S."/>
            <person name="Forrest A.R."/>
            <person name="Zavolan M."/>
            <person name="Davis M.J."/>
            <person name="Wilming L.G."/>
            <person name="Aidinis V."/>
            <person name="Allen J.E."/>
            <person name="Ambesi-Impiombato A."/>
            <person name="Apweiler R."/>
            <person name="Aturaliya R.N."/>
            <person name="Bailey T.L."/>
            <person name="Bansal M."/>
            <person name="Baxter L."/>
            <person name="Beisel K.W."/>
            <person name="Bersano T."/>
            <person name="Bono H."/>
            <person name="Chalk A.M."/>
            <person name="Chiu K.P."/>
            <person name="Choudhary V."/>
            <person name="Christoffels A."/>
            <person name="Clutterbuck D.R."/>
            <person name="Crowe M.L."/>
            <person name="Dalla E."/>
            <person name="Dalrymple B.P."/>
            <person name="de Bono B."/>
            <person name="Della Gatta G."/>
            <person name="di Bernardo D."/>
            <person name="Down T."/>
            <person name="Engstrom P."/>
            <person name="Fagiolini M."/>
            <person name="Faulkner G."/>
            <person name="Fletcher C.F."/>
            <person name="Fukushima T."/>
            <person name="Furuno M."/>
            <person name="Futaki S."/>
            <person name="Gariboldi M."/>
            <person name="Georgii-Hemming P."/>
            <person name="Gingeras T.R."/>
            <person name="Gojobori T."/>
            <person name="Green R.E."/>
            <person name="Gustincich S."/>
            <person name="Harbers M."/>
            <person name="Hayashi Y."/>
            <person name="Hensch T.K."/>
            <person name="Hirokawa N."/>
            <person name="Hill D."/>
            <person name="Huminiecki L."/>
            <person name="Iacono M."/>
            <person name="Ikeo K."/>
            <person name="Iwama A."/>
            <person name="Ishikawa T."/>
            <person name="Jakt M."/>
            <person name="Kanapin A."/>
            <person name="Katoh M."/>
            <person name="Kawasawa Y."/>
            <person name="Kelso J."/>
            <person name="Kitamura H."/>
            <person name="Kitano H."/>
            <person name="Kollias G."/>
            <person name="Krishnan S.P."/>
            <person name="Kruger A."/>
            <person name="Kummerfeld S.K."/>
            <person name="Kurochkin I.V."/>
            <person name="Lareau L.F."/>
            <person name="Lazarevic D."/>
            <person name="Lipovich L."/>
            <person name="Liu J."/>
            <person name="Liuni S."/>
            <person name="McWilliam S."/>
            <person name="Madan Babu M."/>
            <person name="Madera M."/>
            <person name="Marchionni L."/>
            <person name="Matsuda H."/>
            <person name="Matsuzawa S."/>
            <person name="Miki H."/>
            <person name="Mignone F."/>
            <person name="Miyake S."/>
            <person name="Morris K."/>
            <person name="Mottagui-Tabar S."/>
            <person name="Mulder N."/>
            <person name="Nakano N."/>
            <person name="Nakauchi H."/>
            <person name="Ng P."/>
            <person name="Nilsson R."/>
            <person name="Nishiguchi S."/>
            <person name="Nishikawa S."/>
            <person name="Nori F."/>
            <person name="Ohara O."/>
            <person name="Okazaki Y."/>
            <person name="Orlando V."/>
            <person name="Pang K.C."/>
            <person name="Pavan W.J."/>
            <person name="Pavesi G."/>
            <person name="Pesole G."/>
            <person name="Petrovsky N."/>
            <person name="Piazza S."/>
            <person name="Reed J."/>
            <person name="Reid J.F."/>
            <person name="Ring B.Z."/>
            <person name="Ringwald M."/>
            <person name="Rost B."/>
            <person name="Ruan Y."/>
            <person name="Salzberg S.L."/>
            <person name="Sandelin A."/>
            <person name="Schneider C."/>
            <person name="Schoenbach C."/>
            <person name="Sekiguchi K."/>
            <person name="Semple C.A."/>
            <person name="Seno S."/>
            <person name="Sessa L."/>
            <person name="Sheng Y."/>
            <person name="Shibata Y."/>
            <person name="Shimada H."/>
            <person name="Shimada K."/>
            <person name="Silva D."/>
            <person name="Sinclair B."/>
            <person name="Sperling S."/>
            <person name="Stupka E."/>
            <person name="Sugiura K."/>
            <person name="Sultana R."/>
            <person name="Takenaka Y."/>
            <person name="Taki K."/>
            <person name="Tammoja K."/>
            <person name="Tan S.L."/>
            <person name="Tang S."/>
            <person name="Taylor M.S."/>
            <person name="Tegner J."/>
            <person name="Teichmann S.A."/>
            <person name="Ueda H.R."/>
            <person name="van Nimwegen E."/>
            <person name="Verardo R."/>
            <person name="Wei C.L."/>
            <person name="Yagi K."/>
            <person name="Yamanishi H."/>
            <person name="Zabarovsky E."/>
            <person name="Zhu S."/>
            <person name="Zimmer A."/>
            <person name="Hide W."/>
            <person name="Bult C."/>
            <person name="Grimmond S.M."/>
            <person name="Teasdale R.D."/>
            <person name="Liu E.T."/>
            <person name="Brusic V."/>
            <person name="Quackenbush J."/>
            <person name="Wahlestedt C."/>
            <person name="Mattick J.S."/>
            <person name="Hume D.A."/>
            <person name="Kai C."/>
            <person name="Sasaki D."/>
            <person name="Tomaru Y."/>
            <person name="Fukuda S."/>
            <person name="Kanamori-Katayama M."/>
            <person name="Suzuki M."/>
            <person name="Aoki J."/>
            <person name="Arakawa T."/>
            <person name="Iida J."/>
            <person name="Imamura K."/>
            <person name="Itoh M."/>
            <person name="Kato T."/>
            <person name="Kawaji H."/>
            <person name="Kawagashira N."/>
            <person name="Kawashima T."/>
            <person name="Kojima M."/>
            <person name="Kondo S."/>
            <person name="Konno H."/>
            <person name="Nakano K."/>
            <person name="Ninomiya N."/>
            <person name="Nishio T."/>
            <person name="Okada M."/>
            <person name="Plessy C."/>
            <person name="Shibata K."/>
            <person name="Shiraki T."/>
            <person name="Suzuki S."/>
            <person name="Tagami M."/>
            <person name="Waki K."/>
            <person name="Watahiki A."/>
            <person name="Okamura-Oho Y."/>
            <person name="Suzuki H."/>
            <person name="Kawai J."/>
            <person name="Hayashizaki Y."/>
        </authorList>
    </citation>
    <scope>NUCLEOTIDE SEQUENCE [LARGE SCALE MRNA] (ISOFORMS 1; 3 AND 5)</scope>
    <source>
        <strain>C57BL/6J</strain>
        <tissue>Head</tissue>
        <tissue>Testis</tissue>
    </source>
</reference>
<reference key="3">
    <citation type="journal article" date="2004" name="Genome Res.">
        <title>The status, quality, and expansion of the NIH full-length cDNA project: the Mammalian Gene Collection (MGC).</title>
        <authorList>
            <consortium name="The MGC Project Team"/>
        </authorList>
    </citation>
    <scope>NUCLEOTIDE SEQUENCE [LARGE SCALE MRNA] (ISOFORM 4)</scope>
    <source>
        <tissue>Testis</tissue>
    </source>
</reference>
<reference key="4">
    <citation type="journal article" date="1994" name="Biochim. Biophys. Acta">
        <title>Identification and characterization of the developmentally regulated pattern of expression in the testis of a mouse gene exhibiting similarity to the family of phosphodiesterases.</title>
        <authorList>
            <person name="Vambutas V."/>
            <person name="Wolgemuth D.J."/>
        </authorList>
    </citation>
    <scope>NUCLEOTIDE SEQUENCE [MRNA] OF 245-562 (ISOFORM 2)</scope>
    <source>
        <tissue>Testis</tissue>
    </source>
</reference>
<reference key="5">
    <citation type="journal article" date="2009" name="FEBS Lett.">
        <title>Unconventional secretion of tubby and tubby-like protein 1.</title>
        <authorList>
            <person name="Caberoy N.B."/>
            <person name="Li W."/>
        </authorList>
    </citation>
    <scope>SUBCELLULAR LOCATION</scope>
</reference>
<reference key="6">
    <citation type="journal article" date="2010" name="Cell">
        <title>A tissue-specific atlas of mouse protein phosphorylation and expression.</title>
        <authorList>
            <person name="Huttlin E.L."/>
            <person name="Jedrychowski M.P."/>
            <person name="Elias J.E."/>
            <person name="Goswami T."/>
            <person name="Rad R."/>
            <person name="Beausoleil S.A."/>
            <person name="Villen J."/>
            <person name="Haas W."/>
            <person name="Sowa M.E."/>
            <person name="Gygi S.P."/>
        </authorList>
    </citation>
    <scope>PHOSPHORYLATION [LARGE SCALE ANALYSIS] AT SER-152; SER-153; SER-155; THR-211 AND SER-213</scope>
    <scope>IDENTIFICATION BY MASS SPECTROMETRY [LARGE SCALE ANALYSIS]</scope>
    <source>
        <tissue>Testis</tissue>
    </source>
</reference>
<comment type="subcellular location">
    <subcellularLocation>
        <location evidence="2">Cytoplasm</location>
    </subcellularLocation>
    <subcellularLocation>
        <location evidence="2">Secreted</location>
    </subcellularLocation>
    <text>Does not have a cleavable signal peptide and is secreted by a non-conventional pathway.</text>
</comment>
<comment type="alternative products">
    <event type="alternative splicing"/>
    <isoform>
        <id>P46686-1</id>
        <name>1</name>
        <sequence type="displayed"/>
    </isoform>
    <isoform>
        <id>P46686-2</id>
        <name>2</name>
        <sequence type="described" ref="VSP_022199"/>
    </isoform>
    <isoform>
        <id>P46686-3</id>
        <name>3</name>
        <sequence type="described" ref="VSP_022197 VSP_022199"/>
    </isoform>
    <isoform>
        <id>P46686-4</id>
        <name>4</name>
        <sequence type="described" ref="VSP_022197 VSP_022198 VSP_022199"/>
    </isoform>
    <isoform>
        <id>P46686-5</id>
        <name>5</name>
        <sequence type="described" ref="VSP_022197 VSP_022200"/>
    </isoform>
</comment>
<comment type="tissue specificity">
    <text>Expressed in retina and testis.</text>
</comment>
<comment type="similarity">
    <text evidence="7">Belongs to the TUB family.</text>
</comment>
<comment type="caution">
    <text evidence="8">Was originally thought to be a phosphodiesterase on the basis of spurious sequence similarities.</text>
</comment>
<comment type="sequence caution" evidence="7">
    <conflict type="erroneous initiation">
        <sequence resource="EMBL-CDS" id="AAD38452"/>
    </conflict>
</comment>
<comment type="sequence caution" evidence="7">
    <conflict type="erroneous initiation">
        <sequence resource="EMBL-CDS" id="BAC36686"/>
    </conflict>
</comment>
<comment type="sequence caution" evidence="7">
    <conflict type="erroneous initiation">
        <sequence resource="EMBL-CDS" id="CAA49481"/>
    </conflict>
</comment>
<name>TULP2_MOUSE</name>
<proteinExistence type="evidence at protein level"/>
<evidence type="ECO:0000256" key="1">
    <source>
        <dbReference type="SAM" id="MobiDB-lite"/>
    </source>
</evidence>
<evidence type="ECO:0000269" key="2">
    <source>
    </source>
</evidence>
<evidence type="ECO:0000303" key="3">
    <source>
    </source>
</evidence>
<evidence type="ECO:0000303" key="4">
    <source>
    </source>
</evidence>
<evidence type="ECO:0000303" key="5">
    <source>
    </source>
</evidence>
<evidence type="ECO:0000303" key="6">
    <source ref="1"/>
</evidence>
<evidence type="ECO:0000305" key="7"/>
<evidence type="ECO:0000305" key="8">
    <source>
    </source>
</evidence>
<evidence type="ECO:0007744" key="9">
    <source>
    </source>
</evidence>
<protein>
    <recommendedName>
        <fullName>Tubby-related protein 2</fullName>
    </recommendedName>
    <alternativeName>
        <fullName>Protein P4-6</fullName>
    </alternativeName>
    <alternativeName>
        <fullName>Tubby-like protein 2</fullName>
    </alternativeName>
</protein>
<feature type="chain" id="PRO_0000186469" description="Tubby-related protein 2">
    <location>
        <begin position="1"/>
        <end position="562"/>
    </location>
</feature>
<feature type="region of interest" description="Disordered" evidence="1">
    <location>
        <begin position="1"/>
        <end position="81"/>
    </location>
</feature>
<feature type="region of interest" description="Disordered" evidence="1">
    <location>
        <begin position="179"/>
        <end position="294"/>
    </location>
</feature>
<feature type="compositionally biased region" description="Basic and acidic residues" evidence="1">
    <location>
        <begin position="35"/>
        <end position="46"/>
    </location>
</feature>
<feature type="compositionally biased region" description="Basic and acidic residues" evidence="1">
    <location>
        <begin position="225"/>
        <end position="240"/>
    </location>
</feature>
<feature type="compositionally biased region" description="Polar residues" evidence="1">
    <location>
        <begin position="285"/>
        <end position="294"/>
    </location>
</feature>
<feature type="modified residue" description="Phosphoserine" evidence="9">
    <location>
        <position position="152"/>
    </location>
</feature>
<feature type="modified residue" description="Phosphoserine" evidence="9">
    <location>
        <position position="153"/>
    </location>
</feature>
<feature type="modified residue" description="Phosphoserine" evidence="9">
    <location>
        <position position="155"/>
    </location>
</feature>
<feature type="modified residue" description="Phosphothreonine" evidence="9">
    <location>
        <position position="211"/>
    </location>
</feature>
<feature type="modified residue" description="Phosphoserine" evidence="9">
    <location>
        <position position="213"/>
    </location>
</feature>
<feature type="splice variant" id="VSP_022197" description="In isoform 3, isoform 4 and isoform 5." evidence="3 4">
    <location>
        <begin position="1"/>
        <end position="112"/>
    </location>
</feature>
<feature type="splice variant" id="VSP_022198" description="In isoform 4." evidence="3">
    <location>
        <begin position="121"/>
        <end position="132"/>
    </location>
</feature>
<feature type="splice variant" id="VSP_022199" description="In isoform 2, isoform 3 and isoform 4." evidence="3 4 5 6">
    <original>FF</original>
    <variation>CE</variation>
    <location>
        <begin position="561"/>
        <end position="562"/>
    </location>
</feature>
<feature type="splice variant" id="VSP_022200" description="In isoform 5." evidence="4">
    <location>
        <begin position="561"/>
        <end position="562"/>
    </location>
</feature>
<feature type="sequence conflict" description="In Ref. 1; AAD38452." evidence="7" ref="1">
    <original>M</original>
    <variation>R</variation>
    <location>
        <position position="1"/>
    </location>
</feature>
<feature type="sequence conflict" description="In Ref. 4; CAA49481." evidence="7" ref="4">
    <original>L</original>
    <variation>V</variation>
    <location>
        <position position="314"/>
    </location>
</feature>
<feature type="sequence conflict" description="In Ref. 1; AAD38452 and 4; CAA49481." evidence="7" ref="1 4">
    <original>C</original>
    <variation>W</variation>
    <location>
        <position position="324"/>
    </location>
</feature>
<feature type="sequence conflict" description="In Ref. 1; AAD38452 and 4; CAA49481." evidence="7" ref="1 4">
    <original>A</original>
    <variation>G</variation>
    <location>
        <position position="347"/>
    </location>
</feature>
<feature type="sequence conflict" description="In Ref. 4; CAA49481." evidence="7" ref="4">
    <original>T</original>
    <variation>S</variation>
    <location>
        <position position="504"/>
    </location>
</feature>